<dbReference type="EMBL" id="AB240139">
    <property type="protein sequence ID" value="BAE47996.1"/>
    <property type="molecule type" value="Genomic_DNA"/>
</dbReference>
<dbReference type="RefSeq" id="YP_398858.1">
    <property type="nucleotide sequence ID" value="NC_007602.1"/>
</dbReference>
<dbReference type="SMR" id="Q33C39"/>
<dbReference type="GeneID" id="3776287"/>
<dbReference type="KEGG" id="nto:3776287"/>
<dbReference type="OrthoDB" id="1161947at2759"/>
<dbReference type="GO" id="GO:0009535">
    <property type="term" value="C:chloroplast thylakoid membrane"/>
    <property type="evidence" value="ECO:0007669"/>
    <property type="project" value="UniProtKB-SubCell"/>
</dbReference>
<dbReference type="GO" id="GO:0009539">
    <property type="term" value="C:photosystem II reaction center"/>
    <property type="evidence" value="ECO:0007669"/>
    <property type="project" value="InterPro"/>
</dbReference>
<dbReference type="GO" id="GO:0015979">
    <property type="term" value="P:photosynthesis"/>
    <property type="evidence" value="ECO:0007669"/>
    <property type="project" value="UniProtKB-UniRule"/>
</dbReference>
<dbReference type="GO" id="GO:0042549">
    <property type="term" value="P:photosystem II stabilization"/>
    <property type="evidence" value="ECO:0007669"/>
    <property type="project" value="InterPro"/>
</dbReference>
<dbReference type="FunFam" id="1.10.287.740:FF:000001">
    <property type="entry name" value="Photosystem II reaction center protein Z"/>
    <property type="match status" value="1"/>
</dbReference>
<dbReference type="Gene3D" id="1.10.287.740">
    <property type="entry name" value="Photosystem II PsbZ, reaction centre"/>
    <property type="match status" value="1"/>
</dbReference>
<dbReference type="HAMAP" id="MF_00644">
    <property type="entry name" value="PSII_PsbZ"/>
    <property type="match status" value="1"/>
</dbReference>
<dbReference type="InterPro" id="IPR002644">
    <property type="entry name" value="PSII_PsbZ"/>
</dbReference>
<dbReference type="InterPro" id="IPR036512">
    <property type="entry name" value="PSII_PsbZ_sf"/>
</dbReference>
<dbReference type="NCBIfam" id="TIGR03043">
    <property type="entry name" value="PS_II_psbZ"/>
    <property type="match status" value="1"/>
</dbReference>
<dbReference type="PANTHER" id="PTHR34971">
    <property type="entry name" value="PHOTOSYSTEM II REACTION CENTER PROTEIN Z"/>
    <property type="match status" value="1"/>
</dbReference>
<dbReference type="PANTHER" id="PTHR34971:SF2">
    <property type="entry name" value="PHOTOSYSTEM II REACTION CENTER PROTEIN Z"/>
    <property type="match status" value="1"/>
</dbReference>
<dbReference type="Pfam" id="PF01737">
    <property type="entry name" value="Ycf9"/>
    <property type="match status" value="1"/>
</dbReference>
<dbReference type="SUPFAM" id="SSF161055">
    <property type="entry name" value="PsbZ-like"/>
    <property type="match status" value="1"/>
</dbReference>
<accession>Q33C39</accession>
<keyword id="KW-0150">Chloroplast</keyword>
<keyword id="KW-0472">Membrane</keyword>
<keyword id="KW-0602">Photosynthesis</keyword>
<keyword id="KW-0604">Photosystem II</keyword>
<keyword id="KW-0934">Plastid</keyword>
<keyword id="KW-0674">Reaction center</keyword>
<keyword id="KW-0793">Thylakoid</keyword>
<keyword id="KW-0812">Transmembrane</keyword>
<keyword id="KW-1133">Transmembrane helix</keyword>
<protein>
    <recommendedName>
        <fullName evidence="1">Photosystem II reaction center protein Z</fullName>
        <shortName evidence="1">PSII-Z</shortName>
    </recommendedName>
</protein>
<geneLocation type="chloroplast"/>
<name>PSBZ_NICTO</name>
<comment type="function">
    <text evidence="1">May control the interaction of photosystem II (PSII) cores with the light-harvesting antenna, regulates electron flow through the 2 photosystem reaction centers. PSII is a light-driven water plastoquinone oxidoreductase, using light energy to abstract electrons from H(2)O, generating a proton gradient subsequently used for ATP formation.</text>
</comment>
<comment type="subunit">
    <text evidence="1">PSII is composed of 1 copy each of membrane proteins PsbA, PsbB, PsbC, PsbD, PsbE, PsbF, PsbH, PsbI, PsbJ, PsbK, PsbL, PsbM, PsbT, PsbY, PsbZ, Psb30/Ycf12, at least 3 peripheral proteins of the oxygen-evolving complex and a large number of cofactors. It forms dimeric complexes.</text>
</comment>
<comment type="subcellular location">
    <subcellularLocation>
        <location evidence="1">Plastid</location>
        <location evidence="1">Chloroplast thylakoid membrane</location>
        <topology evidence="1">Multi-pass membrane protein</topology>
    </subcellularLocation>
</comment>
<comment type="similarity">
    <text evidence="1">Belongs to the PsbZ family.</text>
</comment>
<gene>
    <name evidence="1" type="primary">psbZ</name>
</gene>
<proteinExistence type="inferred from homology"/>
<evidence type="ECO:0000255" key="1">
    <source>
        <dbReference type="HAMAP-Rule" id="MF_00644"/>
    </source>
</evidence>
<feature type="chain" id="PRO_0000277225" description="Photosystem II reaction center protein Z">
    <location>
        <begin position="1"/>
        <end position="62"/>
    </location>
</feature>
<feature type="transmembrane region" description="Helical" evidence="1">
    <location>
        <begin position="8"/>
        <end position="28"/>
    </location>
</feature>
<feature type="transmembrane region" description="Helical" evidence="1">
    <location>
        <begin position="41"/>
        <end position="61"/>
    </location>
</feature>
<reference key="1">
    <citation type="journal article" date="2006" name="Mol. Genet. Genomics">
        <title>The chloroplast genome of Nicotiana sylvestris and Nicotiana tomentosiformis: complete sequencing confirms that the Nicotiana sylvestris progenitor is the maternal genome donor of Nicotiana tabacum.</title>
        <authorList>
            <person name="Yukawa M."/>
            <person name="Tsudzuki T."/>
            <person name="Sugiura M."/>
        </authorList>
    </citation>
    <scope>NUCLEOTIDE SEQUENCE [LARGE SCALE GENOMIC DNA]</scope>
</reference>
<sequence>MTLAFQLAVFALIATSLILLISVPVVFASPDGWSSNKNVVFSGTSLWIGLVFLVGILNSLIS</sequence>
<organism>
    <name type="scientific">Nicotiana tomentosiformis</name>
    <name type="common">Tobacco</name>
    <dbReference type="NCBI Taxonomy" id="4098"/>
    <lineage>
        <taxon>Eukaryota</taxon>
        <taxon>Viridiplantae</taxon>
        <taxon>Streptophyta</taxon>
        <taxon>Embryophyta</taxon>
        <taxon>Tracheophyta</taxon>
        <taxon>Spermatophyta</taxon>
        <taxon>Magnoliopsida</taxon>
        <taxon>eudicotyledons</taxon>
        <taxon>Gunneridae</taxon>
        <taxon>Pentapetalae</taxon>
        <taxon>asterids</taxon>
        <taxon>lamiids</taxon>
        <taxon>Solanales</taxon>
        <taxon>Solanaceae</taxon>
        <taxon>Nicotianoideae</taxon>
        <taxon>Nicotianeae</taxon>
        <taxon>Nicotiana</taxon>
    </lineage>
</organism>